<evidence type="ECO:0000255" key="1">
    <source>
        <dbReference type="HAMAP-Rule" id="MF_01681"/>
    </source>
</evidence>
<protein>
    <recommendedName>
        <fullName evidence="1">Enolase-phosphatase E1</fullName>
        <ecNumber evidence="1">3.1.3.77</ecNumber>
    </recommendedName>
    <alternativeName>
        <fullName evidence="1">2,3-diketo-5-methylthio-1-phosphopentane phosphatase</fullName>
    </alternativeName>
</protein>
<sequence>MGIRAIVVDTAGTTTDLNFIQDTLFPYSSKALADFLEENQTNVLVDNCISDVKDIALEPDASLERVVEILQQWIAEDRKATPLKTLQGLIWKQGYAQGEFKGHIYPDFIDSVKEIKAQNVRLYSFSSGSVDAQKLLFSHSDGGDLTEYFDGHFDTRTGNKLFKQAYLNIINTISLAPKQVLFISDVLEELKAAEQAGMRVMQMVRETTQRTGDYPQITNFKELSF</sequence>
<comment type="function">
    <text evidence="1">Bifunctional enzyme that catalyzes the enolization of 2,3-diketo-5-methylthiopentyl-1-phosphate (DK-MTP-1-P) into the intermediate 2-hydroxy-3-keto-5-methylthiopentenyl-1-phosphate (HK-MTPenyl-1-P), which is then dephosphorylated to form the acireductone 1,2-dihydroxy-3-keto-5-methylthiopentene (DHK-MTPene).</text>
</comment>
<comment type="catalytic activity">
    <reaction evidence="1">
        <text>5-methylsulfanyl-2,3-dioxopentyl phosphate + H2O = 1,2-dihydroxy-5-(methylsulfanyl)pent-1-en-3-one + phosphate</text>
        <dbReference type="Rhea" id="RHEA:21700"/>
        <dbReference type="ChEBI" id="CHEBI:15377"/>
        <dbReference type="ChEBI" id="CHEBI:43474"/>
        <dbReference type="ChEBI" id="CHEBI:49252"/>
        <dbReference type="ChEBI" id="CHEBI:58828"/>
        <dbReference type="EC" id="3.1.3.77"/>
    </reaction>
</comment>
<comment type="cofactor">
    <cofactor evidence="1">
        <name>Mg(2+)</name>
        <dbReference type="ChEBI" id="CHEBI:18420"/>
    </cofactor>
    <text evidence="1">Binds 1 Mg(2+) ion per subunit.</text>
</comment>
<comment type="pathway">
    <text evidence="1">Amino-acid biosynthesis; L-methionine biosynthesis via salvage pathway; L-methionine from S-methyl-5-thio-alpha-D-ribose 1-phosphate: step 3/6.</text>
</comment>
<comment type="pathway">
    <text evidence="1">Amino-acid biosynthesis; L-methionine biosynthesis via salvage pathway; L-methionine from S-methyl-5-thio-alpha-D-ribose 1-phosphate: step 4/6.</text>
</comment>
<comment type="subunit">
    <text evidence="1">Monomer.</text>
</comment>
<comment type="similarity">
    <text evidence="1">Belongs to the HAD-like hydrolase superfamily. MasA/MtnC family.</text>
</comment>
<dbReference type="EC" id="3.1.3.77" evidence="1"/>
<dbReference type="EMBL" id="CP000606">
    <property type="protein sequence ID" value="ABO25637.1"/>
    <property type="molecule type" value="Genomic_DNA"/>
</dbReference>
<dbReference type="RefSeq" id="WP_011867565.1">
    <property type="nucleotide sequence ID" value="NC_009092.1"/>
</dbReference>
<dbReference type="SMR" id="A3QJI9"/>
<dbReference type="STRING" id="323850.Shew_3771"/>
<dbReference type="KEGG" id="slo:Shew_3771"/>
<dbReference type="eggNOG" id="COG4229">
    <property type="taxonomic scope" value="Bacteria"/>
</dbReference>
<dbReference type="HOGENOM" id="CLU_023273_0_0_6"/>
<dbReference type="OrthoDB" id="9797416at2"/>
<dbReference type="UniPathway" id="UPA00904">
    <property type="reaction ID" value="UER00876"/>
</dbReference>
<dbReference type="UniPathway" id="UPA00904">
    <property type="reaction ID" value="UER00877"/>
</dbReference>
<dbReference type="Proteomes" id="UP000001558">
    <property type="component" value="Chromosome"/>
</dbReference>
<dbReference type="GO" id="GO:0043715">
    <property type="term" value="F:2,3-diketo-5-methylthiopentyl-1-phosphate enolase activity"/>
    <property type="evidence" value="ECO:0007669"/>
    <property type="project" value="UniProtKB-UniRule"/>
</dbReference>
<dbReference type="GO" id="GO:0043716">
    <property type="term" value="F:2-hydroxy-3-keto-5-methylthiopentenyl-1-phosphate phosphatase activity"/>
    <property type="evidence" value="ECO:0007669"/>
    <property type="project" value="UniProtKB-UniRule"/>
</dbReference>
<dbReference type="GO" id="GO:0043874">
    <property type="term" value="F:acireductone synthase activity"/>
    <property type="evidence" value="ECO:0007669"/>
    <property type="project" value="UniProtKB-EC"/>
</dbReference>
<dbReference type="GO" id="GO:0000287">
    <property type="term" value="F:magnesium ion binding"/>
    <property type="evidence" value="ECO:0007669"/>
    <property type="project" value="UniProtKB-UniRule"/>
</dbReference>
<dbReference type="GO" id="GO:0019509">
    <property type="term" value="P:L-methionine salvage from methylthioadenosine"/>
    <property type="evidence" value="ECO:0007669"/>
    <property type="project" value="UniProtKB-UniRule"/>
</dbReference>
<dbReference type="CDD" id="cd01629">
    <property type="entry name" value="HAD_EP"/>
    <property type="match status" value="1"/>
</dbReference>
<dbReference type="FunFam" id="1.10.720.60:FF:000008">
    <property type="entry name" value="Enolase-phosphatase E1"/>
    <property type="match status" value="1"/>
</dbReference>
<dbReference type="Gene3D" id="1.10.720.60">
    <property type="match status" value="1"/>
</dbReference>
<dbReference type="Gene3D" id="3.40.50.1000">
    <property type="entry name" value="HAD superfamily/HAD-like"/>
    <property type="match status" value="1"/>
</dbReference>
<dbReference type="HAMAP" id="MF_01681">
    <property type="entry name" value="Salvage_MtnC"/>
    <property type="match status" value="1"/>
</dbReference>
<dbReference type="InterPro" id="IPR023943">
    <property type="entry name" value="Enolase-ppase_E1"/>
</dbReference>
<dbReference type="InterPro" id="IPR036412">
    <property type="entry name" value="HAD-like_sf"/>
</dbReference>
<dbReference type="InterPro" id="IPR006439">
    <property type="entry name" value="HAD-SF_hydro_IA"/>
</dbReference>
<dbReference type="InterPro" id="IPR023214">
    <property type="entry name" value="HAD_sf"/>
</dbReference>
<dbReference type="NCBIfam" id="TIGR01691">
    <property type="entry name" value="enolase-ppase"/>
    <property type="match status" value="1"/>
</dbReference>
<dbReference type="NCBIfam" id="TIGR01549">
    <property type="entry name" value="HAD-SF-IA-v1"/>
    <property type="match status" value="1"/>
</dbReference>
<dbReference type="PANTHER" id="PTHR20371">
    <property type="entry name" value="ENOLASE-PHOSPHATASE E1"/>
    <property type="match status" value="1"/>
</dbReference>
<dbReference type="PANTHER" id="PTHR20371:SF1">
    <property type="entry name" value="ENOLASE-PHOSPHATASE E1"/>
    <property type="match status" value="1"/>
</dbReference>
<dbReference type="Pfam" id="PF00702">
    <property type="entry name" value="Hydrolase"/>
    <property type="match status" value="1"/>
</dbReference>
<dbReference type="SFLD" id="SFLDF00044">
    <property type="entry name" value="enolase-phosphatase"/>
    <property type="match status" value="1"/>
</dbReference>
<dbReference type="SFLD" id="SFLDS00003">
    <property type="entry name" value="Haloacid_Dehalogenase"/>
    <property type="match status" value="1"/>
</dbReference>
<dbReference type="SUPFAM" id="SSF56784">
    <property type="entry name" value="HAD-like"/>
    <property type="match status" value="1"/>
</dbReference>
<reference key="1">
    <citation type="submission" date="2007-03" db="EMBL/GenBank/DDBJ databases">
        <title>Complete sequence of Shewanella loihica PV-4.</title>
        <authorList>
            <consortium name="US DOE Joint Genome Institute"/>
            <person name="Copeland A."/>
            <person name="Lucas S."/>
            <person name="Lapidus A."/>
            <person name="Barry K."/>
            <person name="Detter J.C."/>
            <person name="Glavina del Rio T."/>
            <person name="Hammon N."/>
            <person name="Israni S."/>
            <person name="Dalin E."/>
            <person name="Tice H."/>
            <person name="Pitluck S."/>
            <person name="Chain P."/>
            <person name="Malfatti S."/>
            <person name="Shin M."/>
            <person name="Vergez L."/>
            <person name="Schmutz J."/>
            <person name="Larimer F."/>
            <person name="Land M."/>
            <person name="Hauser L."/>
            <person name="Kyrpides N."/>
            <person name="Mikhailova N."/>
            <person name="Romine M.F."/>
            <person name="Serres G."/>
            <person name="Fredrickson J."/>
            <person name="Tiedje J."/>
            <person name="Richardson P."/>
        </authorList>
    </citation>
    <scope>NUCLEOTIDE SEQUENCE [LARGE SCALE GENOMIC DNA]</scope>
    <source>
        <strain>ATCC BAA-1088 / PV-4</strain>
    </source>
</reference>
<feature type="chain" id="PRO_0000357403" description="Enolase-phosphatase E1">
    <location>
        <begin position="1"/>
        <end position="225"/>
    </location>
</feature>
<gene>
    <name evidence="1" type="primary">mtnC</name>
    <name type="ordered locus">Shew_3771</name>
</gene>
<organism>
    <name type="scientific">Shewanella loihica (strain ATCC BAA-1088 / PV-4)</name>
    <dbReference type="NCBI Taxonomy" id="323850"/>
    <lineage>
        <taxon>Bacteria</taxon>
        <taxon>Pseudomonadati</taxon>
        <taxon>Pseudomonadota</taxon>
        <taxon>Gammaproteobacteria</taxon>
        <taxon>Alteromonadales</taxon>
        <taxon>Shewanellaceae</taxon>
        <taxon>Shewanella</taxon>
    </lineage>
</organism>
<name>MTNC_SHELP</name>
<proteinExistence type="inferred from homology"/>
<accession>A3QJI9</accession>
<keyword id="KW-0028">Amino-acid biosynthesis</keyword>
<keyword id="KW-0378">Hydrolase</keyword>
<keyword id="KW-0460">Magnesium</keyword>
<keyword id="KW-0479">Metal-binding</keyword>
<keyword id="KW-0486">Methionine biosynthesis</keyword>
<keyword id="KW-1185">Reference proteome</keyword>